<comment type="function">
    <text evidence="2">Catalyzes the reversible phosphorolytic breakdown of the N-glycosidic bond in the beta-(deoxy)ribonucleoside molecules, with the formation of the corresponding free purine bases and pentose-1-phosphate.</text>
</comment>
<comment type="catalytic activity">
    <reaction evidence="2">
        <text>a purine D-ribonucleoside + phosphate = a purine nucleobase + alpha-D-ribose 1-phosphate</text>
        <dbReference type="Rhea" id="RHEA:19805"/>
        <dbReference type="ChEBI" id="CHEBI:26386"/>
        <dbReference type="ChEBI" id="CHEBI:43474"/>
        <dbReference type="ChEBI" id="CHEBI:57720"/>
        <dbReference type="ChEBI" id="CHEBI:142355"/>
        <dbReference type="EC" id="2.4.2.1"/>
    </reaction>
</comment>
<comment type="catalytic activity">
    <reaction evidence="2">
        <text>a purine 2'-deoxy-D-ribonucleoside + phosphate = a purine nucleobase + 2-deoxy-alpha-D-ribose 1-phosphate</text>
        <dbReference type="Rhea" id="RHEA:36431"/>
        <dbReference type="ChEBI" id="CHEBI:26386"/>
        <dbReference type="ChEBI" id="CHEBI:43474"/>
        <dbReference type="ChEBI" id="CHEBI:57259"/>
        <dbReference type="ChEBI" id="CHEBI:142361"/>
        <dbReference type="EC" id="2.4.2.1"/>
    </reaction>
</comment>
<comment type="subunit">
    <text evidence="2">Homohexamer; trimer of homodimers.</text>
</comment>
<comment type="similarity">
    <text evidence="2">Belongs to the PNP/UDP phosphorylase family.</text>
</comment>
<accession>Q92AF2</accession>
<name>DEOD_LISIN</name>
<gene>
    <name evidence="2" type="primary">deoD</name>
    <name type="ordered locus">lin1970</name>
</gene>
<evidence type="ECO:0000250" key="1">
    <source>
        <dbReference type="UniProtKB" id="P50389"/>
    </source>
</evidence>
<evidence type="ECO:0000255" key="2">
    <source>
        <dbReference type="HAMAP-Rule" id="MF_01627"/>
    </source>
</evidence>
<dbReference type="EC" id="2.4.2.1" evidence="2"/>
<dbReference type="EMBL" id="AL596170">
    <property type="protein sequence ID" value="CAC97200.1"/>
    <property type="molecule type" value="Genomic_DNA"/>
</dbReference>
<dbReference type="PIR" id="AH1678">
    <property type="entry name" value="AH1678"/>
</dbReference>
<dbReference type="RefSeq" id="WP_003767481.1">
    <property type="nucleotide sequence ID" value="NC_003212.1"/>
</dbReference>
<dbReference type="SMR" id="Q92AF2"/>
<dbReference type="STRING" id="272626.gene:17566328"/>
<dbReference type="GeneID" id="93235308"/>
<dbReference type="KEGG" id="lin:deoD"/>
<dbReference type="eggNOG" id="COG0813">
    <property type="taxonomic scope" value="Bacteria"/>
</dbReference>
<dbReference type="HOGENOM" id="CLU_068457_2_0_9"/>
<dbReference type="OrthoDB" id="9782889at2"/>
<dbReference type="Proteomes" id="UP000002513">
    <property type="component" value="Chromosome"/>
</dbReference>
<dbReference type="GO" id="GO:0005829">
    <property type="term" value="C:cytosol"/>
    <property type="evidence" value="ECO:0007669"/>
    <property type="project" value="TreeGrafter"/>
</dbReference>
<dbReference type="GO" id="GO:0004731">
    <property type="term" value="F:purine-nucleoside phosphorylase activity"/>
    <property type="evidence" value="ECO:0007669"/>
    <property type="project" value="UniProtKB-UniRule"/>
</dbReference>
<dbReference type="GO" id="GO:0006152">
    <property type="term" value="P:purine nucleoside catabolic process"/>
    <property type="evidence" value="ECO:0007669"/>
    <property type="project" value="TreeGrafter"/>
</dbReference>
<dbReference type="CDD" id="cd09006">
    <property type="entry name" value="PNP_EcPNPI-like"/>
    <property type="match status" value="1"/>
</dbReference>
<dbReference type="Gene3D" id="3.40.50.1580">
    <property type="entry name" value="Nucleoside phosphorylase domain"/>
    <property type="match status" value="1"/>
</dbReference>
<dbReference type="HAMAP" id="MF_01627">
    <property type="entry name" value="Pur_nucleosid_phosp"/>
    <property type="match status" value="1"/>
</dbReference>
<dbReference type="InterPro" id="IPR004402">
    <property type="entry name" value="DeoD-type"/>
</dbReference>
<dbReference type="InterPro" id="IPR018016">
    <property type="entry name" value="Nucleoside_phosphorylase_CS"/>
</dbReference>
<dbReference type="InterPro" id="IPR000845">
    <property type="entry name" value="Nucleoside_phosphorylase_d"/>
</dbReference>
<dbReference type="InterPro" id="IPR035994">
    <property type="entry name" value="Nucleoside_phosphorylase_sf"/>
</dbReference>
<dbReference type="NCBIfam" id="TIGR00107">
    <property type="entry name" value="deoD"/>
    <property type="match status" value="1"/>
</dbReference>
<dbReference type="NCBIfam" id="NF004489">
    <property type="entry name" value="PRK05819.1"/>
    <property type="match status" value="1"/>
</dbReference>
<dbReference type="NCBIfam" id="NF009914">
    <property type="entry name" value="PRK13374.1"/>
    <property type="match status" value="1"/>
</dbReference>
<dbReference type="PANTHER" id="PTHR43691:SF11">
    <property type="entry name" value="FI09636P-RELATED"/>
    <property type="match status" value="1"/>
</dbReference>
<dbReference type="PANTHER" id="PTHR43691">
    <property type="entry name" value="URIDINE PHOSPHORYLASE"/>
    <property type="match status" value="1"/>
</dbReference>
<dbReference type="Pfam" id="PF01048">
    <property type="entry name" value="PNP_UDP_1"/>
    <property type="match status" value="1"/>
</dbReference>
<dbReference type="SUPFAM" id="SSF53167">
    <property type="entry name" value="Purine and uridine phosphorylases"/>
    <property type="match status" value="1"/>
</dbReference>
<dbReference type="PROSITE" id="PS01232">
    <property type="entry name" value="PNP_UDP_1"/>
    <property type="match status" value="1"/>
</dbReference>
<protein>
    <recommendedName>
        <fullName evidence="2">Purine nucleoside phosphorylase DeoD-type</fullName>
        <shortName evidence="2">PNP</shortName>
        <ecNumber evidence="2">2.4.2.1</ecNumber>
    </recommendedName>
</protein>
<feature type="chain" id="PRO_0000063142" description="Purine nucleoside phosphorylase DeoD-type">
    <location>
        <begin position="1"/>
        <end position="233"/>
    </location>
</feature>
<feature type="active site" description="Proton donor" evidence="2">
    <location>
        <position position="203"/>
    </location>
</feature>
<feature type="binding site" evidence="1">
    <location>
        <position position="4"/>
    </location>
    <ligand>
        <name>a purine D-ribonucleoside</name>
        <dbReference type="ChEBI" id="CHEBI:142355"/>
        <note>ligand shared between dimeric partners</note>
    </ligand>
</feature>
<feature type="binding site" description="in other chain" evidence="1">
    <location>
        <position position="20"/>
    </location>
    <ligand>
        <name>phosphate</name>
        <dbReference type="ChEBI" id="CHEBI:43474"/>
        <note>ligand shared between dimeric partners</note>
    </ligand>
</feature>
<feature type="binding site" description="in other chain" evidence="1">
    <location>
        <position position="24"/>
    </location>
    <ligand>
        <name>phosphate</name>
        <dbReference type="ChEBI" id="CHEBI:43474"/>
        <note>ligand shared between dimeric partners</note>
    </ligand>
</feature>
<feature type="binding site" evidence="1">
    <location>
        <position position="43"/>
    </location>
    <ligand>
        <name>phosphate</name>
        <dbReference type="ChEBI" id="CHEBI:43474"/>
        <note>ligand shared between dimeric partners</note>
    </ligand>
</feature>
<feature type="binding site" description="in other chain" evidence="1">
    <location>
        <begin position="87"/>
        <end position="90"/>
    </location>
    <ligand>
        <name>phosphate</name>
        <dbReference type="ChEBI" id="CHEBI:43474"/>
        <note>ligand shared between dimeric partners</note>
    </ligand>
</feature>
<feature type="binding site" description="in other chain" evidence="1">
    <location>
        <begin position="178"/>
        <end position="180"/>
    </location>
    <ligand>
        <name>a purine D-ribonucleoside</name>
        <dbReference type="ChEBI" id="CHEBI:142355"/>
        <note>ligand shared between dimeric partners</note>
    </ligand>
</feature>
<feature type="binding site" description="in other chain" evidence="1">
    <location>
        <begin position="202"/>
        <end position="203"/>
    </location>
    <ligand>
        <name>a purine D-ribonucleoside</name>
        <dbReference type="ChEBI" id="CHEBI:142355"/>
        <note>ligand shared between dimeric partners</note>
    </ligand>
</feature>
<feature type="site" description="Important for catalytic activity" evidence="2">
    <location>
        <position position="216"/>
    </location>
</feature>
<keyword id="KW-0328">Glycosyltransferase</keyword>
<keyword id="KW-0808">Transferase</keyword>
<organism>
    <name type="scientific">Listeria innocua serovar 6a (strain ATCC BAA-680 / CLIP 11262)</name>
    <dbReference type="NCBI Taxonomy" id="272626"/>
    <lineage>
        <taxon>Bacteria</taxon>
        <taxon>Bacillati</taxon>
        <taxon>Bacillota</taxon>
        <taxon>Bacilli</taxon>
        <taxon>Bacillales</taxon>
        <taxon>Listeriaceae</taxon>
        <taxon>Listeria</taxon>
    </lineage>
</organism>
<reference key="1">
    <citation type="journal article" date="2001" name="Science">
        <title>Comparative genomics of Listeria species.</title>
        <authorList>
            <person name="Glaser P."/>
            <person name="Frangeul L."/>
            <person name="Buchrieser C."/>
            <person name="Rusniok C."/>
            <person name="Amend A."/>
            <person name="Baquero F."/>
            <person name="Berche P."/>
            <person name="Bloecker H."/>
            <person name="Brandt P."/>
            <person name="Chakraborty T."/>
            <person name="Charbit A."/>
            <person name="Chetouani F."/>
            <person name="Couve E."/>
            <person name="de Daruvar A."/>
            <person name="Dehoux P."/>
            <person name="Domann E."/>
            <person name="Dominguez-Bernal G."/>
            <person name="Duchaud E."/>
            <person name="Durant L."/>
            <person name="Dussurget O."/>
            <person name="Entian K.-D."/>
            <person name="Fsihi H."/>
            <person name="Garcia-del Portillo F."/>
            <person name="Garrido P."/>
            <person name="Gautier L."/>
            <person name="Goebel W."/>
            <person name="Gomez-Lopez N."/>
            <person name="Hain T."/>
            <person name="Hauf J."/>
            <person name="Jackson D."/>
            <person name="Jones L.-M."/>
            <person name="Kaerst U."/>
            <person name="Kreft J."/>
            <person name="Kuhn M."/>
            <person name="Kunst F."/>
            <person name="Kurapkat G."/>
            <person name="Madueno E."/>
            <person name="Maitournam A."/>
            <person name="Mata Vicente J."/>
            <person name="Ng E."/>
            <person name="Nedjari H."/>
            <person name="Nordsiek G."/>
            <person name="Novella S."/>
            <person name="de Pablos B."/>
            <person name="Perez-Diaz J.-C."/>
            <person name="Purcell R."/>
            <person name="Remmel B."/>
            <person name="Rose M."/>
            <person name="Schlueter T."/>
            <person name="Simoes N."/>
            <person name="Tierrez A."/>
            <person name="Vazquez-Boland J.-A."/>
            <person name="Voss H."/>
            <person name="Wehland J."/>
            <person name="Cossart P."/>
        </authorList>
    </citation>
    <scope>NUCLEOTIDE SEQUENCE [LARGE SCALE GENOMIC DNA]</scope>
    <source>
        <strain>ATCC BAA-680 / CLIP 11262</strain>
    </source>
</reference>
<sequence>MSVHIEAKQGEIAETILLPGDPLRAKYIAETFLEDVVLFNQVRGMLGFTGTYKGEKVSVMGTGMGIPSISIYVNELIQSYDVKNLIRVGTMGGIQADVKVRDVVIAQAASTDSQINRNTFAGVDFAPVADFSLLKKAYDAGVEKGLSLKVGNVFSADRFYNDQLDKQQLADYGVLGIEMEAAALYTLAQKYGRRALAILTVSDHIFTGEETSAEERQTTFNDMIVVALEAAIK</sequence>
<proteinExistence type="inferred from homology"/>